<keyword id="KW-1185">Reference proteome</keyword>
<keyword id="KW-0687">Ribonucleoprotein</keyword>
<keyword id="KW-0689">Ribosomal protein</keyword>
<proteinExistence type="inferred from homology"/>
<evidence type="ECO:0000255" key="1">
    <source>
        <dbReference type="HAMAP-Rule" id="MF_00291"/>
    </source>
</evidence>
<evidence type="ECO:0000256" key="2">
    <source>
        <dbReference type="SAM" id="MobiDB-lite"/>
    </source>
</evidence>
<evidence type="ECO:0000305" key="3"/>
<gene>
    <name evidence="1" type="primary">rpsB</name>
    <name type="ordered locus">jk1175</name>
</gene>
<sequence>MAVVTMRELLDAGVHFGHQTRRWNPKMKRFIFTDRNGIYIIDLQQTLTYIDEAYEFVKETVAHGGNILYVGTKKQAQEAVANEAERVGMPYVNHRWLGGMLTNFQTVAKRLHRLKELQAMDAAEDGYKGRTKKEVLMLTRERNKLERVLGGIADMTKTPSALWIVDTNKEHIAVSEAQKLNIPVVAILDTNCDPDVVDYPIPGNDDAIRSANLLTSIISSAVEAGRQARAERQEAAAKEAAGDADKAPAEAERTEAPAEEAPAEAQSEAKAEGNTEA</sequence>
<comment type="similarity">
    <text evidence="1">Belongs to the universal ribosomal protein uS2 family.</text>
</comment>
<dbReference type="EMBL" id="CR931997">
    <property type="protein sequence ID" value="CAI37339.1"/>
    <property type="molecule type" value="Genomic_DNA"/>
</dbReference>
<dbReference type="RefSeq" id="WP_005295280.1">
    <property type="nucleotide sequence ID" value="NC_007164.1"/>
</dbReference>
<dbReference type="SMR" id="Q4JV18"/>
<dbReference type="STRING" id="306537.jk1175"/>
<dbReference type="GeneID" id="92738694"/>
<dbReference type="KEGG" id="cjk:jk1175"/>
<dbReference type="eggNOG" id="COG0052">
    <property type="taxonomic scope" value="Bacteria"/>
</dbReference>
<dbReference type="HOGENOM" id="CLU_040318_2_2_11"/>
<dbReference type="OrthoDB" id="9808036at2"/>
<dbReference type="Proteomes" id="UP000000545">
    <property type="component" value="Chromosome"/>
</dbReference>
<dbReference type="GO" id="GO:0022627">
    <property type="term" value="C:cytosolic small ribosomal subunit"/>
    <property type="evidence" value="ECO:0007669"/>
    <property type="project" value="TreeGrafter"/>
</dbReference>
<dbReference type="GO" id="GO:0003735">
    <property type="term" value="F:structural constituent of ribosome"/>
    <property type="evidence" value="ECO:0007669"/>
    <property type="project" value="InterPro"/>
</dbReference>
<dbReference type="GO" id="GO:0006412">
    <property type="term" value="P:translation"/>
    <property type="evidence" value="ECO:0007669"/>
    <property type="project" value="UniProtKB-UniRule"/>
</dbReference>
<dbReference type="CDD" id="cd01425">
    <property type="entry name" value="RPS2"/>
    <property type="match status" value="1"/>
</dbReference>
<dbReference type="FunFam" id="1.10.287.610:FF:000001">
    <property type="entry name" value="30S ribosomal protein S2"/>
    <property type="match status" value="1"/>
</dbReference>
<dbReference type="Gene3D" id="3.40.50.10490">
    <property type="entry name" value="Glucose-6-phosphate isomerase like protein, domain 1"/>
    <property type="match status" value="1"/>
</dbReference>
<dbReference type="Gene3D" id="1.10.287.610">
    <property type="entry name" value="Helix hairpin bin"/>
    <property type="match status" value="1"/>
</dbReference>
<dbReference type="HAMAP" id="MF_00291_B">
    <property type="entry name" value="Ribosomal_uS2_B"/>
    <property type="match status" value="1"/>
</dbReference>
<dbReference type="InterPro" id="IPR001865">
    <property type="entry name" value="Ribosomal_uS2"/>
</dbReference>
<dbReference type="InterPro" id="IPR005706">
    <property type="entry name" value="Ribosomal_uS2_bac/mit/plastid"/>
</dbReference>
<dbReference type="InterPro" id="IPR018130">
    <property type="entry name" value="Ribosomal_uS2_CS"/>
</dbReference>
<dbReference type="InterPro" id="IPR023591">
    <property type="entry name" value="Ribosomal_uS2_flav_dom_sf"/>
</dbReference>
<dbReference type="NCBIfam" id="TIGR01011">
    <property type="entry name" value="rpsB_bact"/>
    <property type="match status" value="1"/>
</dbReference>
<dbReference type="PANTHER" id="PTHR12534">
    <property type="entry name" value="30S RIBOSOMAL PROTEIN S2 PROKARYOTIC AND ORGANELLAR"/>
    <property type="match status" value="1"/>
</dbReference>
<dbReference type="PANTHER" id="PTHR12534:SF0">
    <property type="entry name" value="SMALL RIBOSOMAL SUBUNIT PROTEIN US2M"/>
    <property type="match status" value="1"/>
</dbReference>
<dbReference type="Pfam" id="PF00318">
    <property type="entry name" value="Ribosomal_S2"/>
    <property type="match status" value="1"/>
</dbReference>
<dbReference type="PRINTS" id="PR00395">
    <property type="entry name" value="RIBOSOMALS2"/>
</dbReference>
<dbReference type="SUPFAM" id="SSF52313">
    <property type="entry name" value="Ribosomal protein S2"/>
    <property type="match status" value="1"/>
</dbReference>
<dbReference type="PROSITE" id="PS00962">
    <property type="entry name" value="RIBOSOMAL_S2_1"/>
    <property type="match status" value="1"/>
</dbReference>
<accession>Q4JV18</accession>
<name>RS2_CORJK</name>
<organism>
    <name type="scientific">Corynebacterium jeikeium (strain K411)</name>
    <dbReference type="NCBI Taxonomy" id="306537"/>
    <lineage>
        <taxon>Bacteria</taxon>
        <taxon>Bacillati</taxon>
        <taxon>Actinomycetota</taxon>
        <taxon>Actinomycetes</taxon>
        <taxon>Mycobacteriales</taxon>
        <taxon>Corynebacteriaceae</taxon>
        <taxon>Corynebacterium</taxon>
    </lineage>
</organism>
<reference key="1">
    <citation type="journal article" date="2005" name="J. Bacteriol.">
        <title>Complete genome sequence and analysis of the multiresistant nosocomial pathogen Corynebacterium jeikeium K411, a lipid-requiring bacterium of the human skin flora.</title>
        <authorList>
            <person name="Tauch A."/>
            <person name="Kaiser O."/>
            <person name="Hain T."/>
            <person name="Goesmann A."/>
            <person name="Weisshaar B."/>
            <person name="Albersmeier A."/>
            <person name="Bekel T."/>
            <person name="Bischoff N."/>
            <person name="Brune I."/>
            <person name="Chakraborty T."/>
            <person name="Kalinowski J."/>
            <person name="Meyer F."/>
            <person name="Rupp O."/>
            <person name="Schneiker S."/>
            <person name="Viehoever P."/>
            <person name="Puehler A."/>
        </authorList>
    </citation>
    <scope>NUCLEOTIDE SEQUENCE [LARGE SCALE GENOMIC DNA]</scope>
    <source>
        <strain>K411</strain>
    </source>
</reference>
<protein>
    <recommendedName>
        <fullName evidence="1">Small ribosomal subunit protein uS2</fullName>
    </recommendedName>
    <alternativeName>
        <fullName evidence="3">30S ribosomal protein S2</fullName>
    </alternativeName>
</protein>
<feature type="chain" id="PRO_1000003943" description="Small ribosomal subunit protein uS2">
    <location>
        <begin position="1"/>
        <end position="277"/>
    </location>
</feature>
<feature type="region of interest" description="Disordered" evidence="2">
    <location>
        <begin position="227"/>
        <end position="277"/>
    </location>
</feature>
<feature type="compositionally biased region" description="Basic and acidic residues" evidence="2">
    <location>
        <begin position="227"/>
        <end position="256"/>
    </location>
</feature>
<feature type="compositionally biased region" description="Basic and acidic residues" evidence="2">
    <location>
        <begin position="267"/>
        <end position="277"/>
    </location>
</feature>